<proteinExistence type="inferred from homology"/>
<sequence>MKEAFLKACRGIRTDYTPVWFMRQAGRYMPEYQKLRQKYDFLTMCKTPEIAAEVTLQPVKVLGVDAAILFSDILIPLEAMGLKIEFIDDKGPQVLPNIRTVADLEILGELNLEKIGFVFDAIRILINELNVPLIGFAASPFTLATYVIEGGSTKEFVNTKRFMFLEPEGFHKLMSLFTKATQKYLNEQIRAGVHAVQIFDTWAGILSPFDYESFVKPYVKRLIESLKTVPVIYFSSNTAGLINHLKELNADVLSIDWRIDIKDATDLLKNKPLQGNLDPLTLLGSDEELFKRVEKVLIGARGAKSHIFNLGHGVNINTSVDKLKKLVDFVHEFKFMED</sequence>
<comment type="function">
    <text evidence="1">Catalyzes the decarboxylation of four acetate groups of uroporphyrinogen-III to yield coproporphyrinogen-III.</text>
</comment>
<comment type="catalytic activity">
    <reaction evidence="1">
        <text>uroporphyrinogen III + 4 H(+) = coproporphyrinogen III + 4 CO2</text>
        <dbReference type="Rhea" id="RHEA:19865"/>
        <dbReference type="ChEBI" id="CHEBI:15378"/>
        <dbReference type="ChEBI" id="CHEBI:16526"/>
        <dbReference type="ChEBI" id="CHEBI:57308"/>
        <dbReference type="ChEBI" id="CHEBI:57309"/>
        <dbReference type="EC" id="4.1.1.37"/>
    </reaction>
</comment>
<comment type="pathway">
    <text evidence="1">Porphyrin-containing compound metabolism; protoporphyrin-IX biosynthesis; coproporphyrinogen-III from 5-aminolevulinate: step 4/4.</text>
</comment>
<comment type="subunit">
    <text evidence="1">Homodimer.</text>
</comment>
<comment type="subcellular location">
    <subcellularLocation>
        <location evidence="1">Cytoplasm</location>
    </subcellularLocation>
</comment>
<comment type="similarity">
    <text evidence="1">Belongs to the uroporphyrinogen decarboxylase family.</text>
</comment>
<protein>
    <recommendedName>
        <fullName evidence="1">Uroporphyrinogen decarboxylase</fullName>
        <shortName evidence="1">UPD</shortName>
        <shortName evidence="1">URO-D</shortName>
        <ecNumber evidence="1">4.1.1.37</ecNumber>
    </recommendedName>
</protein>
<organism>
    <name type="scientific">Thermodesulfovibrio yellowstonii (strain ATCC 51303 / DSM 11347 / YP87)</name>
    <dbReference type="NCBI Taxonomy" id="289376"/>
    <lineage>
        <taxon>Bacteria</taxon>
        <taxon>Pseudomonadati</taxon>
        <taxon>Nitrospirota</taxon>
        <taxon>Thermodesulfovibrionia</taxon>
        <taxon>Thermodesulfovibrionales</taxon>
        <taxon>Thermodesulfovibrionaceae</taxon>
        <taxon>Thermodesulfovibrio</taxon>
    </lineage>
</organism>
<reference key="1">
    <citation type="submission" date="2008-08" db="EMBL/GenBank/DDBJ databases">
        <title>The complete genome sequence of Thermodesulfovibrio yellowstonii strain ATCC 51303 / DSM 11347 / YP87.</title>
        <authorList>
            <person name="Dodson R.J."/>
            <person name="Durkin A.S."/>
            <person name="Wu M."/>
            <person name="Eisen J."/>
            <person name="Sutton G."/>
        </authorList>
    </citation>
    <scope>NUCLEOTIDE SEQUENCE [LARGE SCALE GENOMIC DNA]</scope>
    <source>
        <strain>ATCC 51303 / DSM 11347 / YP87</strain>
    </source>
</reference>
<gene>
    <name evidence="1" type="primary">hemE</name>
    <name type="ordered locus">THEYE_A0806</name>
</gene>
<evidence type="ECO:0000255" key="1">
    <source>
        <dbReference type="HAMAP-Rule" id="MF_00218"/>
    </source>
</evidence>
<keyword id="KW-0963">Cytoplasm</keyword>
<keyword id="KW-0210">Decarboxylase</keyword>
<keyword id="KW-0456">Lyase</keyword>
<keyword id="KW-0627">Porphyrin biosynthesis</keyword>
<keyword id="KW-1185">Reference proteome</keyword>
<feature type="chain" id="PRO_1000100022" description="Uroporphyrinogen decarboxylase">
    <location>
        <begin position="1"/>
        <end position="338"/>
    </location>
</feature>
<feature type="binding site" evidence="1">
    <location>
        <begin position="23"/>
        <end position="27"/>
    </location>
    <ligand>
        <name>substrate</name>
    </ligand>
</feature>
<feature type="binding site" evidence="1">
    <location>
        <position position="72"/>
    </location>
    <ligand>
        <name>substrate</name>
    </ligand>
</feature>
<feature type="binding site" evidence="1">
    <location>
        <position position="146"/>
    </location>
    <ligand>
        <name>substrate</name>
    </ligand>
</feature>
<feature type="binding site" evidence="1">
    <location>
        <position position="201"/>
    </location>
    <ligand>
        <name>substrate</name>
    </ligand>
</feature>
<feature type="binding site" evidence="1">
    <location>
        <position position="312"/>
    </location>
    <ligand>
        <name>substrate</name>
    </ligand>
</feature>
<feature type="site" description="Transition state stabilizer" evidence="1">
    <location>
        <position position="72"/>
    </location>
</feature>
<dbReference type="EC" id="4.1.1.37" evidence="1"/>
<dbReference type="EMBL" id="CP001147">
    <property type="protein sequence ID" value="ACI20916.1"/>
    <property type="molecule type" value="Genomic_DNA"/>
</dbReference>
<dbReference type="RefSeq" id="WP_012545646.1">
    <property type="nucleotide sequence ID" value="NC_011296.1"/>
</dbReference>
<dbReference type="RefSeq" id="YP_002248647.1">
    <property type="nucleotide sequence ID" value="NC_011296.1"/>
</dbReference>
<dbReference type="SMR" id="B5YK82"/>
<dbReference type="FunCoup" id="B5YK82">
    <property type="interactions" value="425"/>
</dbReference>
<dbReference type="STRING" id="289376.THEYE_A0806"/>
<dbReference type="EnsemblBacteria" id="ACI20916">
    <property type="protein sequence ID" value="ACI20916"/>
    <property type="gene ID" value="THEYE_A0806"/>
</dbReference>
<dbReference type="KEGG" id="tye:THEYE_A0806"/>
<dbReference type="PATRIC" id="fig|289376.4.peg.796"/>
<dbReference type="eggNOG" id="COG0407">
    <property type="taxonomic scope" value="Bacteria"/>
</dbReference>
<dbReference type="HOGENOM" id="CLU_040933_0_1_0"/>
<dbReference type="InParanoid" id="B5YK82"/>
<dbReference type="OrthoDB" id="9806656at2"/>
<dbReference type="UniPathway" id="UPA00251">
    <property type="reaction ID" value="UER00321"/>
</dbReference>
<dbReference type="Proteomes" id="UP000000718">
    <property type="component" value="Chromosome"/>
</dbReference>
<dbReference type="GO" id="GO:0005829">
    <property type="term" value="C:cytosol"/>
    <property type="evidence" value="ECO:0000318"/>
    <property type="project" value="GO_Central"/>
</dbReference>
<dbReference type="GO" id="GO:0004853">
    <property type="term" value="F:uroporphyrinogen decarboxylase activity"/>
    <property type="evidence" value="ECO:0000318"/>
    <property type="project" value="GO_Central"/>
</dbReference>
<dbReference type="GO" id="GO:0006783">
    <property type="term" value="P:heme biosynthetic process"/>
    <property type="evidence" value="ECO:0000318"/>
    <property type="project" value="GO_Central"/>
</dbReference>
<dbReference type="GO" id="GO:0006782">
    <property type="term" value="P:protoporphyrinogen IX biosynthetic process"/>
    <property type="evidence" value="ECO:0007669"/>
    <property type="project" value="UniProtKB-UniRule"/>
</dbReference>
<dbReference type="CDD" id="cd00717">
    <property type="entry name" value="URO-D"/>
    <property type="match status" value="1"/>
</dbReference>
<dbReference type="FunFam" id="3.20.20.210:FF:000007">
    <property type="entry name" value="Uroporphyrinogen decarboxylase"/>
    <property type="match status" value="1"/>
</dbReference>
<dbReference type="Gene3D" id="3.20.20.210">
    <property type="match status" value="1"/>
</dbReference>
<dbReference type="HAMAP" id="MF_00218">
    <property type="entry name" value="URO_D"/>
    <property type="match status" value="1"/>
</dbReference>
<dbReference type="InterPro" id="IPR038071">
    <property type="entry name" value="UROD/MetE-like_sf"/>
</dbReference>
<dbReference type="InterPro" id="IPR006361">
    <property type="entry name" value="Uroporphyrinogen_deCO2ase_HemE"/>
</dbReference>
<dbReference type="InterPro" id="IPR000257">
    <property type="entry name" value="Uroporphyrinogen_deCOase"/>
</dbReference>
<dbReference type="NCBIfam" id="TIGR01464">
    <property type="entry name" value="hemE"/>
    <property type="match status" value="1"/>
</dbReference>
<dbReference type="PANTHER" id="PTHR21091">
    <property type="entry name" value="METHYLTETRAHYDROFOLATE:HOMOCYSTEINE METHYLTRANSFERASE RELATED"/>
    <property type="match status" value="1"/>
</dbReference>
<dbReference type="PANTHER" id="PTHR21091:SF169">
    <property type="entry name" value="UROPORPHYRINOGEN DECARBOXYLASE"/>
    <property type="match status" value="1"/>
</dbReference>
<dbReference type="Pfam" id="PF01208">
    <property type="entry name" value="URO-D"/>
    <property type="match status" value="1"/>
</dbReference>
<dbReference type="SUPFAM" id="SSF51726">
    <property type="entry name" value="UROD/MetE-like"/>
    <property type="match status" value="1"/>
</dbReference>
<dbReference type="PROSITE" id="PS00906">
    <property type="entry name" value="UROD_1"/>
    <property type="match status" value="1"/>
</dbReference>
<dbReference type="PROSITE" id="PS00907">
    <property type="entry name" value="UROD_2"/>
    <property type="match status" value="1"/>
</dbReference>
<accession>B5YK82</accession>
<name>DCUP_THEYD</name>